<organism>
    <name type="scientific">Homo sapiens</name>
    <name type="common">Human</name>
    <dbReference type="NCBI Taxonomy" id="9606"/>
    <lineage>
        <taxon>Eukaryota</taxon>
        <taxon>Metazoa</taxon>
        <taxon>Chordata</taxon>
        <taxon>Craniata</taxon>
        <taxon>Vertebrata</taxon>
        <taxon>Euteleostomi</taxon>
        <taxon>Mammalia</taxon>
        <taxon>Eutheria</taxon>
        <taxon>Euarchontoglires</taxon>
        <taxon>Primates</taxon>
        <taxon>Haplorrhini</taxon>
        <taxon>Catarrhini</taxon>
        <taxon>Hominidae</taxon>
        <taxon>Homo</taxon>
    </lineage>
</organism>
<protein>
    <recommendedName>
        <fullName evidence="18">Transmembrane protein 41B</fullName>
    </recommendedName>
    <alternativeName>
        <fullName evidence="16">Protein stasimon</fullName>
    </alternativeName>
</protein>
<evidence type="ECO:0000250" key="1">
    <source>
        <dbReference type="UniProtKB" id="A1A5V7"/>
    </source>
</evidence>
<evidence type="ECO:0000255" key="2"/>
<evidence type="ECO:0000256" key="3">
    <source>
        <dbReference type="SAM" id="MobiDB-lite"/>
    </source>
</evidence>
<evidence type="ECO:0000269" key="4">
    <source>
    </source>
</evidence>
<evidence type="ECO:0000269" key="5">
    <source>
    </source>
</evidence>
<evidence type="ECO:0000269" key="6">
    <source>
    </source>
</evidence>
<evidence type="ECO:0000269" key="7">
    <source>
    </source>
</evidence>
<evidence type="ECO:0000269" key="8">
    <source>
    </source>
</evidence>
<evidence type="ECO:0000269" key="9">
    <source>
    </source>
</evidence>
<evidence type="ECO:0000269" key="10">
    <source>
    </source>
</evidence>
<evidence type="ECO:0000269" key="11">
    <source>
    </source>
</evidence>
<evidence type="ECO:0000269" key="12">
    <source>
    </source>
</evidence>
<evidence type="ECO:0000269" key="13">
    <source>
    </source>
</evidence>
<evidence type="ECO:0000303" key="14">
    <source>
    </source>
</evidence>
<evidence type="ECO:0000303" key="15">
    <source>
    </source>
</evidence>
<evidence type="ECO:0000303" key="16">
    <source>
    </source>
</evidence>
<evidence type="ECO:0000303" key="17">
    <source>
    </source>
</evidence>
<evidence type="ECO:0000305" key="18"/>
<evidence type="ECO:0000305" key="19">
    <source>
    </source>
</evidence>
<evidence type="ECO:0000312" key="20">
    <source>
        <dbReference type="HGNC" id="HGNC:28948"/>
    </source>
</evidence>
<evidence type="ECO:0007744" key="21">
    <source>
    </source>
</evidence>
<evidence type="ECO:0007744" key="22">
    <source>
    </source>
</evidence>
<gene>
    <name evidence="16 20" type="primary">TMEM41B</name>
    <name evidence="17" type="synonym">KIAA0033</name>
</gene>
<accession>Q5BJD5</accession>
<accession>D3DQU9</accession>
<accession>E9PP29</accession>
<accession>Q15055</accession>
<accession>Q4G0P0</accession>
<sequence length="291" mass="32513">MAKGRVAERSQLGAHHTTPVGDGAAGTRGLAAPGSRDHQKEKSWVEAGSARMSLLILVSIFLSAAFVMFLVYKNFPQLSEEERVNMKVPRDMDDAKALGKVLSKYKDTFYVQVLVAYFATYIFLQTFAIPGSIFLSILSGFLYPFPLALFLVCLCSGLGASFCYMLSYLVGRPVVYKYLTEKAVKWSQQVERHREHLINYIIFLRITPFLPNWFINITSPVINVPLKVFFIGTFLGVAPPSFVAIKAGTTLYQLTTAGEAVSWNSIFILMILAVLSILPAIFQKKLKQKFE</sequence>
<keyword id="KW-0025">Alternative splicing</keyword>
<keyword id="KW-0072">Autophagy</keyword>
<keyword id="KW-0963">Cytoplasm</keyword>
<keyword id="KW-0256">Endoplasmic reticulum</keyword>
<keyword id="KW-0945">Host-virus interaction</keyword>
<keyword id="KW-0445">Lipid transport</keyword>
<keyword id="KW-0472">Membrane</keyword>
<keyword id="KW-0524">Neurogenesis</keyword>
<keyword id="KW-0597">Phosphoprotein</keyword>
<keyword id="KW-1267">Proteomics identification</keyword>
<keyword id="KW-1185">Reference proteome</keyword>
<keyword id="KW-0812">Transmembrane</keyword>
<keyword id="KW-1133">Transmembrane helix</keyword>
<keyword id="KW-0813">Transport</keyword>
<name>TM41B_HUMAN</name>
<dbReference type="EMBL" id="D26067">
    <property type="protein sequence ID" value="BAA05062.1"/>
    <property type="status" value="ALT_INIT"/>
    <property type="molecule type" value="mRNA"/>
</dbReference>
<dbReference type="EMBL" id="DA149513">
    <property type="status" value="NOT_ANNOTATED_CDS"/>
    <property type="molecule type" value="mRNA"/>
</dbReference>
<dbReference type="EMBL" id="AC055845">
    <property type="status" value="NOT_ANNOTATED_CDS"/>
    <property type="molecule type" value="Genomic_DNA"/>
</dbReference>
<dbReference type="EMBL" id="CH471064">
    <property type="protein sequence ID" value="EAW68594.1"/>
    <property type="molecule type" value="Genomic_DNA"/>
</dbReference>
<dbReference type="EMBL" id="CH471064">
    <property type="protein sequence ID" value="EAW68597.1"/>
    <property type="molecule type" value="Genomic_DNA"/>
</dbReference>
<dbReference type="EMBL" id="BC035034">
    <property type="protein sequence ID" value="AAH35034.1"/>
    <property type="molecule type" value="mRNA"/>
</dbReference>
<dbReference type="EMBL" id="BC044597">
    <property type="protein sequence ID" value="AAH44597.1"/>
    <property type="molecule type" value="mRNA"/>
</dbReference>
<dbReference type="EMBL" id="BC091524">
    <property type="protein sequence ID" value="AAH91524.1"/>
    <property type="molecule type" value="mRNA"/>
</dbReference>
<dbReference type="CCDS" id="CCDS31424.1">
    <molecule id="Q5BJD5-1"/>
</dbReference>
<dbReference type="CCDS" id="CCDS53600.1">
    <molecule id="Q5BJD5-3"/>
</dbReference>
<dbReference type="RefSeq" id="NP_001158502.1">
    <molecule id="Q5BJD5-3"/>
    <property type="nucleotide sequence ID" value="NM_001165030.3"/>
</dbReference>
<dbReference type="RefSeq" id="NP_055827.1">
    <molecule id="Q5BJD5-1"/>
    <property type="nucleotide sequence ID" value="NM_015012.4"/>
</dbReference>
<dbReference type="RefSeq" id="XP_047282925.1">
    <molecule id="Q5BJD5-2"/>
    <property type="nucleotide sequence ID" value="XM_047426969.1"/>
</dbReference>
<dbReference type="RefSeq" id="XP_054224821.1">
    <molecule id="Q5BJD5-1"/>
    <property type="nucleotide sequence ID" value="XM_054368846.1"/>
</dbReference>
<dbReference type="RefSeq" id="XP_054224822.1">
    <molecule id="Q5BJD5-2"/>
    <property type="nucleotide sequence ID" value="XM_054368847.1"/>
</dbReference>
<dbReference type="BioGRID" id="136224">
    <property type="interactions" value="179"/>
</dbReference>
<dbReference type="FunCoup" id="Q5BJD5">
    <property type="interactions" value="1143"/>
</dbReference>
<dbReference type="IntAct" id="Q5BJD5">
    <property type="interactions" value="16"/>
</dbReference>
<dbReference type="STRING" id="9606.ENSP00000433126"/>
<dbReference type="TCDB" id="9.B.27.1.8">
    <property type="family name" value="the death effector domain a (deda) family"/>
</dbReference>
<dbReference type="GlyGen" id="Q5BJD5">
    <property type="glycosylation" value="1 site, 1 O-linked glycan (1 site)"/>
</dbReference>
<dbReference type="iPTMnet" id="Q5BJD5"/>
<dbReference type="PhosphoSitePlus" id="Q5BJD5"/>
<dbReference type="SwissPalm" id="Q5BJD5"/>
<dbReference type="BioMuta" id="TMEM41B"/>
<dbReference type="DMDM" id="74741383"/>
<dbReference type="jPOST" id="Q5BJD5"/>
<dbReference type="MassIVE" id="Q5BJD5"/>
<dbReference type="PaxDb" id="9606-ENSP00000433126"/>
<dbReference type="PeptideAtlas" id="Q5BJD5"/>
<dbReference type="ProteomicsDB" id="22598"/>
<dbReference type="ProteomicsDB" id="62674">
    <molecule id="Q5BJD5-1"/>
</dbReference>
<dbReference type="ProteomicsDB" id="62675">
    <molecule id="Q5BJD5-2"/>
</dbReference>
<dbReference type="Pumba" id="Q5BJD5"/>
<dbReference type="Antibodypedia" id="11559">
    <property type="antibodies" value="18 antibodies from 11 providers"/>
</dbReference>
<dbReference type="DNASU" id="440026"/>
<dbReference type="Ensembl" id="ENST00000299596.8">
    <molecule id="Q5BJD5-1"/>
    <property type="protein sequence ID" value="ENSP00000299596.4"/>
    <property type="gene ID" value="ENSG00000166471.11"/>
</dbReference>
<dbReference type="Ensembl" id="ENST00000524543.5">
    <molecule id="Q5BJD5-2"/>
    <property type="protein sequence ID" value="ENSP00000431934.1"/>
    <property type="gene ID" value="ENSG00000166471.11"/>
</dbReference>
<dbReference type="Ensembl" id="ENST00000528080.6">
    <molecule id="Q5BJD5-1"/>
    <property type="protein sequence ID" value="ENSP00000433126.1"/>
    <property type="gene ID" value="ENSG00000166471.11"/>
</dbReference>
<dbReference type="Ensembl" id="ENST00000533723.1">
    <molecule id="Q5BJD5-3"/>
    <property type="protein sequence ID" value="ENSP00000436480.1"/>
    <property type="gene ID" value="ENSG00000166471.11"/>
</dbReference>
<dbReference type="Ensembl" id="ENST00000611268.4">
    <molecule id="Q5BJD5-1"/>
    <property type="protein sequence ID" value="ENSP00000480141.1"/>
    <property type="gene ID" value="ENSG00000166471.11"/>
</dbReference>
<dbReference type="GeneID" id="440026"/>
<dbReference type="KEGG" id="hsa:440026"/>
<dbReference type="MANE-Select" id="ENST00000528080.6">
    <property type="protein sequence ID" value="ENSP00000433126.1"/>
    <property type="RefSeq nucleotide sequence ID" value="NM_015012.4"/>
    <property type="RefSeq protein sequence ID" value="NP_055827.1"/>
</dbReference>
<dbReference type="UCSC" id="uc001mhm.5">
    <molecule id="Q5BJD5-1"/>
    <property type="organism name" value="human"/>
</dbReference>
<dbReference type="AGR" id="HGNC:28948"/>
<dbReference type="CTD" id="440026"/>
<dbReference type="DisGeNET" id="440026"/>
<dbReference type="GeneCards" id="TMEM41B"/>
<dbReference type="HGNC" id="HGNC:28948">
    <property type="gene designation" value="TMEM41B"/>
</dbReference>
<dbReference type="HPA" id="ENSG00000166471">
    <property type="expression patterns" value="Low tissue specificity"/>
</dbReference>
<dbReference type="MIM" id="620271">
    <property type="type" value="gene"/>
</dbReference>
<dbReference type="neXtProt" id="NX_Q5BJD5"/>
<dbReference type="OpenTargets" id="ENSG00000166471"/>
<dbReference type="PharmGKB" id="PA134898265"/>
<dbReference type="VEuPathDB" id="HostDB:ENSG00000166471"/>
<dbReference type="eggNOG" id="KOG3140">
    <property type="taxonomic scope" value="Eukaryota"/>
</dbReference>
<dbReference type="GeneTree" id="ENSGT00940000156956"/>
<dbReference type="HOGENOM" id="CLU_038944_0_1_1"/>
<dbReference type="InParanoid" id="Q5BJD5"/>
<dbReference type="OMA" id="CIKIPRD"/>
<dbReference type="OrthoDB" id="3364966at2759"/>
<dbReference type="PAN-GO" id="Q5BJD5">
    <property type="GO annotations" value="1 GO annotation based on evolutionary models"/>
</dbReference>
<dbReference type="PhylomeDB" id="Q5BJD5"/>
<dbReference type="TreeFam" id="TF314301"/>
<dbReference type="PathwayCommons" id="Q5BJD5"/>
<dbReference type="SignaLink" id="Q5BJD5"/>
<dbReference type="BioGRID-ORCS" id="440026">
    <property type="hits" value="148 hits in 1177 CRISPR screens"/>
</dbReference>
<dbReference type="ChiTaRS" id="TMEM41B">
    <property type="organism name" value="human"/>
</dbReference>
<dbReference type="GenomeRNAi" id="440026"/>
<dbReference type="Pharos" id="Q5BJD5">
    <property type="development level" value="Tbio"/>
</dbReference>
<dbReference type="PRO" id="PR:Q5BJD5"/>
<dbReference type="Proteomes" id="UP000005640">
    <property type="component" value="Chromosome 11"/>
</dbReference>
<dbReference type="RNAct" id="Q5BJD5">
    <property type="molecule type" value="protein"/>
</dbReference>
<dbReference type="Bgee" id="ENSG00000166471">
    <property type="expression patterns" value="Expressed in middle temporal gyrus and 209 other cell types or tissues"/>
</dbReference>
<dbReference type="ExpressionAtlas" id="Q5BJD5">
    <property type="expression patterns" value="baseline and differential"/>
</dbReference>
<dbReference type="GO" id="GO:0005789">
    <property type="term" value="C:endoplasmic reticulum membrane"/>
    <property type="evidence" value="ECO:0000314"/>
    <property type="project" value="UniProtKB"/>
</dbReference>
<dbReference type="GO" id="GO:0044233">
    <property type="term" value="C:mitochondria-associated endoplasmic reticulum membrane contact site"/>
    <property type="evidence" value="ECO:0000314"/>
    <property type="project" value="UniProtKB"/>
</dbReference>
<dbReference type="GO" id="GO:0017128">
    <property type="term" value="F:phospholipid scramblase activity"/>
    <property type="evidence" value="ECO:0000314"/>
    <property type="project" value="UniProtKB"/>
</dbReference>
<dbReference type="GO" id="GO:0000045">
    <property type="term" value="P:autophagosome assembly"/>
    <property type="evidence" value="ECO:0000315"/>
    <property type="project" value="UniProtKB"/>
</dbReference>
<dbReference type="GO" id="GO:0032365">
    <property type="term" value="P:intracellular lipid transport"/>
    <property type="evidence" value="ECO:0000314"/>
    <property type="project" value="UniProtKB"/>
</dbReference>
<dbReference type="GO" id="GO:0044830">
    <property type="term" value="P:modulation by host of viral RNA genome replication"/>
    <property type="evidence" value="ECO:0000314"/>
    <property type="project" value="UniProtKB"/>
</dbReference>
<dbReference type="GO" id="GO:0007399">
    <property type="term" value="P:nervous system development"/>
    <property type="evidence" value="ECO:0007669"/>
    <property type="project" value="UniProtKB-KW"/>
</dbReference>
<dbReference type="InterPro" id="IPR045014">
    <property type="entry name" value="TM41A/B"/>
</dbReference>
<dbReference type="InterPro" id="IPR032816">
    <property type="entry name" value="VTT_dom"/>
</dbReference>
<dbReference type="PANTHER" id="PTHR43220">
    <property type="match status" value="1"/>
</dbReference>
<dbReference type="PANTHER" id="PTHR43220:SF18">
    <property type="entry name" value="TRANSMEMBRANE PROTEIN 41B"/>
    <property type="match status" value="1"/>
</dbReference>
<dbReference type="Pfam" id="PF09335">
    <property type="entry name" value="VTT_dom"/>
    <property type="match status" value="1"/>
</dbReference>
<feature type="chain" id="PRO_0000291937" description="Transmembrane protein 41B">
    <location>
        <begin position="1"/>
        <end position="291"/>
    </location>
</feature>
<feature type="transmembrane region" description="Helical" evidence="2">
    <location>
        <begin position="52"/>
        <end position="72"/>
    </location>
</feature>
<feature type="transmembrane region" description="Helical" evidence="2">
    <location>
        <begin position="109"/>
        <end position="129"/>
    </location>
</feature>
<feature type="transmembrane region" description="Helical" evidence="2">
    <location>
        <begin position="147"/>
        <end position="169"/>
    </location>
</feature>
<feature type="transmembrane region" description="Helical" evidence="2">
    <location>
        <begin position="197"/>
        <end position="217"/>
    </location>
</feature>
<feature type="transmembrane region" description="Helical" evidence="2">
    <location>
        <begin position="225"/>
        <end position="245"/>
    </location>
</feature>
<feature type="transmembrane region" description="Helical" evidence="2">
    <location>
        <begin position="262"/>
        <end position="282"/>
    </location>
</feature>
<feature type="region of interest" description="Disordered" evidence="3">
    <location>
        <begin position="1"/>
        <end position="39"/>
    </location>
</feature>
<feature type="region of interest" description="VTT domain; required for its function in autophagy" evidence="19">
    <location>
        <begin position="140"/>
        <end position="251"/>
    </location>
</feature>
<feature type="modified residue" description="Phosphothreonine" evidence="22">
    <location>
        <position position="18"/>
    </location>
</feature>
<feature type="modified residue" description="Phosphoserine" evidence="21">
    <location>
        <position position="35"/>
    </location>
</feature>
<feature type="splice variant" id="VSP_045268" description="In isoform 3." evidence="14">
    <original>FLQTF</original>
    <variation>LYPFN</variation>
    <location>
        <begin position="123"/>
        <end position="127"/>
    </location>
</feature>
<feature type="splice variant" id="VSP_026316" description="In isoform 2." evidence="15">
    <original>LQTFAIPGSIFLSILSGFLYPFPLALFLVCLCSGLGASFCYMLSYLVGRPVVYKYLTEKAVKWSQQVER</original>
    <variation>YQLANICYSRLYISQYTLRVSLSLSTSLISCLFVFWTWCLFLLYAFLFSWETSCIQIPNRESSKMVTAG</variation>
    <location>
        <begin position="124"/>
        <end position="192"/>
    </location>
</feature>
<feature type="splice variant" id="VSP_045269" description="In isoform 3." evidence="14">
    <location>
        <begin position="128"/>
        <end position="291"/>
    </location>
</feature>
<feature type="splice variant" id="VSP_026317" description="In isoform 2." evidence="15">
    <location>
        <begin position="193"/>
        <end position="291"/>
    </location>
</feature>
<feature type="sequence variant" id="VAR_084309" description="Reduced infection with flaviviruses such as Yellow fever virus, Zika virus and Dengue virus; no effect on mobilization of neutral lipids from lipid droplets." evidence="8">
    <original>I</original>
    <variation>L</variation>
    <location>
        <position position="266"/>
    </location>
</feature>
<feature type="sequence variant" id="VAR_084310" description="Reduced infection with Yellow fever virus, Zika virus and Dengue virus; no effect on mobilization of neutral lipids from lipid droplets." evidence="8">
    <original>I</original>
    <variation>V</variation>
    <location>
        <position position="266"/>
    </location>
</feature>
<comment type="function">
    <text evidence="1 4 5 7 10 11 12 13">Phospholipid scramblase involved in lipid homeostasis and membrane dynamics processes (PubMed:33850023, PubMed:33929485, PubMed:34015269). Has phospholipid scramblase activity toward cholesterol and phosphatidylserine, as well as phosphatidylethanolamine and phosphatidylcholine (PubMed:33850023, PubMed:33929485, PubMed:34015269). Required for autophagosome formation: participates in early stages of autophagosome biogenesis at the endoplasmic reticulum (ER) membrane by reequilibrating the leaflets of the ER as lipids are extracted by ATG2 (ATG2A or ATG2B) to mediate autophagosome assembly (PubMed:30093494, PubMed:30126924, PubMed:30933966, PubMed:33850023, PubMed:33929485, PubMed:34015269, PubMed:34043740). In addition to autophagy, involved in other processes in which phospholipid scramblase activity is required (PubMed:33850023). Required for normal motor neuron development (By similarity).</text>
</comment>
<comment type="function">
    <text evidence="8 9 13">(Microbial infection) Critical host factor required for infection by human coronaviruses SARS-CoV-2, HCoV-OC43, HCoV-NL63, and HCoV-229E, as well as all flaviviruses tested such as Zika virus and Yellow fever virus (PubMed:33338421, PubMed:33382968). Required post-entry of the virus to facilitate the ER membrane remodeling necessary to form replication organelles (PubMed:33382968).</text>
</comment>
<comment type="catalytic activity">
    <reaction evidence="11">
        <text>a 1,2-diacyl-sn-glycero-3-phospho-L-serine(in) = a 1,2-diacyl-sn-glycero-3-phospho-L-serine(out)</text>
        <dbReference type="Rhea" id="RHEA:38663"/>
        <dbReference type="ChEBI" id="CHEBI:57262"/>
    </reaction>
</comment>
<comment type="catalytic activity">
    <reaction evidence="11">
        <text>cholesterol(in) = cholesterol(out)</text>
        <dbReference type="Rhea" id="RHEA:39747"/>
        <dbReference type="ChEBI" id="CHEBI:16113"/>
    </reaction>
</comment>
<comment type="catalytic activity">
    <reaction evidence="10 11 12">
        <text>a 1,2-diacyl-sn-glycero-3-phosphocholine(in) = a 1,2-diacyl-sn-glycero-3-phosphocholine(out)</text>
        <dbReference type="Rhea" id="RHEA:38571"/>
        <dbReference type="ChEBI" id="CHEBI:57643"/>
    </reaction>
</comment>
<comment type="catalytic activity">
    <reaction evidence="10 11">
        <text>a 1,2-diacyl-sn-glycero-3-phosphoethanolamine(in) = a 1,2-diacyl-sn-glycero-3-phosphoethanolamine(out)</text>
        <dbReference type="Rhea" id="RHEA:38895"/>
        <dbReference type="ChEBI" id="CHEBI:64612"/>
    </reaction>
</comment>
<comment type="subunit">
    <text evidence="4 6 10 12">Interacts with VMP1 (PubMed:30093494). Interacts with COPA, COPB1, VDAC1 and ERLIN2 (PubMed:30352685). Interacts with ATG2A (PubMed:33850023). Interacts with SURF4 (PubMed:34015269).</text>
</comment>
<comment type="subunit">
    <text evidence="8">(Microbial infection) Interacts with Zika virus NS4A protein and Yellow fever virus NS4B protein.</text>
</comment>
<comment type="interaction">
    <interactant intactId="EBI-1055840">
        <id>Q5BJD5</id>
    </interactant>
    <interactant intactId="EBI-20625235">
        <id>A0A142I5B9</id>
    </interactant>
    <organismsDiffer>true</organismsDiffer>
    <experiments>3</experiments>
</comment>
<comment type="subcellular location">
    <subcellularLocation>
        <location evidence="4 5 6 7 8 12 13">Endoplasmic reticulum membrane</location>
        <topology evidence="2">Multi-pass membrane protein</topology>
    </subcellularLocation>
    <subcellularLocation>
        <location evidence="12">Endomembrane system</location>
    </subcellularLocation>
    <text evidence="6">Localized to specific membrane structures termed mitochondria-associated membranes (MAMs) which connect the endoplasmic reticulum (ER) and the mitochondria.</text>
</comment>
<comment type="subcellular location">
    <subcellularLocation>
        <location evidence="8">Cytoplasm</location>
    </subcellularLocation>
    <text evidence="8">(Microbial infection) Upon infection with infection with flaviviruses, diffuse reticular-like pattern to a large cytosolic aggregate that colocalizes with viral non-structural proteins, NS4A (ZIKV) and NS4B (YFV).</text>
</comment>
<comment type="alternative products">
    <event type="alternative splicing"/>
    <isoform>
        <id>Q5BJD5-1</id>
        <name>1</name>
        <sequence type="displayed"/>
    </isoform>
    <isoform>
        <id>Q5BJD5-2</id>
        <name>2</name>
        <sequence type="described" ref="VSP_026316 VSP_026317"/>
    </isoform>
    <isoform>
        <id>Q5BJD5-3</id>
        <name>3</name>
        <sequence type="described" ref="VSP_045268 VSP_045269"/>
    </isoform>
</comment>
<comment type="domain">
    <text evidence="19">The VTT domain was previously called the SNARE-assoc domain. As there is no evidence that this domain associates with SNARE proteins, it was renamed as VMP1, TMEM41, and TVP38 (VTT) domain.</text>
</comment>
<comment type="domain">
    <text evidence="8">(Microbial infection) VTT domain is required for flavivirus infection.</text>
</comment>
<comment type="similarity">
    <text evidence="18">Belongs to the TMEM41 family.</text>
</comment>
<comment type="sequence caution" evidence="18">
    <conflict type="erroneous initiation">
        <sequence resource="EMBL-CDS" id="BAA05062"/>
    </conflict>
    <text>Extended N-terminus.</text>
</comment>
<proteinExistence type="evidence at protein level"/>
<reference key="1">
    <citation type="journal article" date="1994" name="DNA Res.">
        <title>Prediction of the coding sequences of unidentified human genes. I. The coding sequences of 40 new genes (KIAA0001-KIAA0040) deduced by analysis of randomly sampled cDNA clones from human immature myeloid cell line KG-1.</title>
        <authorList>
            <person name="Nomura N."/>
            <person name="Miyajima N."/>
            <person name="Sazuka T."/>
            <person name="Tanaka A."/>
            <person name="Kawarabayasi Y."/>
            <person name="Sato S."/>
            <person name="Nagase T."/>
            <person name="Seki N."/>
            <person name="Ishikawa K."/>
            <person name="Tabata S."/>
        </authorList>
    </citation>
    <scope>NUCLEOTIDE SEQUENCE [LARGE SCALE MRNA] (ISOFORM 1)</scope>
    <source>
        <tissue>Bone marrow</tissue>
    </source>
</reference>
<reference key="2">
    <citation type="journal article" date="2004" name="Nat. Genet.">
        <title>Complete sequencing and characterization of 21,243 full-length human cDNAs.</title>
        <authorList>
            <person name="Ota T."/>
            <person name="Suzuki Y."/>
            <person name="Nishikawa T."/>
            <person name="Otsuki T."/>
            <person name="Sugiyama T."/>
            <person name="Irie R."/>
            <person name="Wakamatsu A."/>
            <person name="Hayashi K."/>
            <person name="Sato H."/>
            <person name="Nagai K."/>
            <person name="Kimura K."/>
            <person name="Makita H."/>
            <person name="Sekine M."/>
            <person name="Obayashi M."/>
            <person name="Nishi T."/>
            <person name="Shibahara T."/>
            <person name="Tanaka T."/>
            <person name="Ishii S."/>
            <person name="Yamamoto J."/>
            <person name="Saito K."/>
            <person name="Kawai Y."/>
            <person name="Isono Y."/>
            <person name="Nakamura Y."/>
            <person name="Nagahari K."/>
            <person name="Murakami K."/>
            <person name="Yasuda T."/>
            <person name="Iwayanagi T."/>
            <person name="Wagatsuma M."/>
            <person name="Shiratori A."/>
            <person name="Sudo H."/>
            <person name="Hosoiri T."/>
            <person name="Kaku Y."/>
            <person name="Kodaira H."/>
            <person name="Kondo H."/>
            <person name="Sugawara M."/>
            <person name="Takahashi M."/>
            <person name="Kanda K."/>
            <person name="Yokoi T."/>
            <person name="Furuya T."/>
            <person name="Kikkawa E."/>
            <person name="Omura Y."/>
            <person name="Abe K."/>
            <person name="Kamihara K."/>
            <person name="Katsuta N."/>
            <person name="Sato K."/>
            <person name="Tanikawa M."/>
            <person name="Yamazaki M."/>
            <person name="Ninomiya K."/>
            <person name="Ishibashi T."/>
            <person name="Yamashita H."/>
            <person name="Murakawa K."/>
            <person name="Fujimori K."/>
            <person name="Tanai H."/>
            <person name="Kimata M."/>
            <person name="Watanabe M."/>
            <person name="Hiraoka S."/>
            <person name="Chiba Y."/>
            <person name="Ishida S."/>
            <person name="Ono Y."/>
            <person name="Takiguchi S."/>
            <person name="Watanabe S."/>
            <person name="Yosida M."/>
            <person name="Hotuta T."/>
            <person name="Kusano J."/>
            <person name="Kanehori K."/>
            <person name="Takahashi-Fujii A."/>
            <person name="Hara H."/>
            <person name="Tanase T.-O."/>
            <person name="Nomura Y."/>
            <person name="Togiya S."/>
            <person name="Komai F."/>
            <person name="Hara R."/>
            <person name="Takeuchi K."/>
            <person name="Arita M."/>
            <person name="Imose N."/>
            <person name="Musashino K."/>
            <person name="Yuuki H."/>
            <person name="Oshima A."/>
            <person name="Sasaki N."/>
            <person name="Aotsuka S."/>
            <person name="Yoshikawa Y."/>
            <person name="Matsunawa H."/>
            <person name="Ichihara T."/>
            <person name="Shiohata N."/>
            <person name="Sano S."/>
            <person name="Moriya S."/>
            <person name="Momiyama H."/>
            <person name="Satoh N."/>
            <person name="Takami S."/>
            <person name="Terashima Y."/>
            <person name="Suzuki O."/>
            <person name="Nakagawa S."/>
            <person name="Senoh A."/>
            <person name="Mizoguchi H."/>
            <person name="Goto Y."/>
            <person name="Shimizu F."/>
            <person name="Wakebe H."/>
            <person name="Hishigaki H."/>
            <person name="Watanabe T."/>
            <person name="Sugiyama A."/>
            <person name="Takemoto M."/>
            <person name="Kawakami B."/>
            <person name="Yamazaki M."/>
            <person name="Watanabe K."/>
            <person name="Kumagai A."/>
            <person name="Itakura S."/>
            <person name="Fukuzumi Y."/>
            <person name="Fujimori Y."/>
            <person name="Komiyama M."/>
            <person name="Tashiro H."/>
            <person name="Tanigami A."/>
            <person name="Fujiwara T."/>
            <person name="Ono T."/>
            <person name="Yamada K."/>
            <person name="Fujii Y."/>
            <person name="Ozaki K."/>
            <person name="Hirao M."/>
            <person name="Ohmori Y."/>
            <person name="Kawabata A."/>
            <person name="Hikiji T."/>
            <person name="Kobatake N."/>
            <person name="Inagaki H."/>
            <person name="Ikema Y."/>
            <person name="Okamoto S."/>
            <person name="Okitani R."/>
            <person name="Kawakami T."/>
            <person name="Noguchi S."/>
            <person name="Itoh T."/>
            <person name="Shigeta K."/>
            <person name="Senba T."/>
            <person name="Matsumura K."/>
            <person name="Nakajima Y."/>
            <person name="Mizuno T."/>
            <person name="Morinaga M."/>
            <person name="Sasaki M."/>
            <person name="Togashi T."/>
            <person name="Oyama M."/>
            <person name="Hata H."/>
            <person name="Watanabe M."/>
            <person name="Komatsu T."/>
            <person name="Mizushima-Sugano J."/>
            <person name="Satoh T."/>
            <person name="Shirai Y."/>
            <person name="Takahashi Y."/>
            <person name="Nakagawa K."/>
            <person name="Okumura K."/>
            <person name="Nagase T."/>
            <person name="Nomura N."/>
            <person name="Kikuchi H."/>
            <person name="Masuho Y."/>
            <person name="Yamashita R."/>
            <person name="Nakai K."/>
            <person name="Yada T."/>
            <person name="Nakamura Y."/>
            <person name="Ohara O."/>
            <person name="Isogai T."/>
            <person name="Sugano S."/>
        </authorList>
    </citation>
    <scope>NUCLEOTIDE SEQUENCE [LARGE SCALE MRNA] (ISOFORM 3)</scope>
    <source>
        <tissue>Amygdala</tissue>
    </source>
</reference>
<reference key="3">
    <citation type="journal article" date="2006" name="Nature">
        <title>Human chromosome 11 DNA sequence and analysis including novel gene identification.</title>
        <authorList>
            <person name="Taylor T.D."/>
            <person name="Noguchi H."/>
            <person name="Totoki Y."/>
            <person name="Toyoda A."/>
            <person name="Kuroki Y."/>
            <person name="Dewar K."/>
            <person name="Lloyd C."/>
            <person name="Itoh T."/>
            <person name="Takeda T."/>
            <person name="Kim D.-W."/>
            <person name="She X."/>
            <person name="Barlow K.F."/>
            <person name="Bloom T."/>
            <person name="Bruford E."/>
            <person name="Chang J.L."/>
            <person name="Cuomo C.A."/>
            <person name="Eichler E."/>
            <person name="FitzGerald M.G."/>
            <person name="Jaffe D.B."/>
            <person name="LaButti K."/>
            <person name="Nicol R."/>
            <person name="Park H.-S."/>
            <person name="Seaman C."/>
            <person name="Sougnez C."/>
            <person name="Yang X."/>
            <person name="Zimmer A.R."/>
            <person name="Zody M.C."/>
            <person name="Birren B.W."/>
            <person name="Nusbaum C."/>
            <person name="Fujiyama A."/>
            <person name="Hattori M."/>
            <person name="Rogers J."/>
            <person name="Lander E.S."/>
            <person name="Sakaki Y."/>
        </authorList>
    </citation>
    <scope>NUCLEOTIDE SEQUENCE [LARGE SCALE GENOMIC DNA]</scope>
</reference>
<reference key="4">
    <citation type="submission" date="2005-09" db="EMBL/GenBank/DDBJ databases">
        <authorList>
            <person name="Mural R.J."/>
            <person name="Istrail S."/>
            <person name="Sutton G.G."/>
            <person name="Florea L."/>
            <person name="Halpern A.L."/>
            <person name="Mobarry C.M."/>
            <person name="Lippert R."/>
            <person name="Walenz B."/>
            <person name="Shatkay H."/>
            <person name="Dew I."/>
            <person name="Miller J.R."/>
            <person name="Flanigan M.J."/>
            <person name="Edwards N.J."/>
            <person name="Bolanos R."/>
            <person name="Fasulo D."/>
            <person name="Halldorsson B.V."/>
            <person name="Hannenhalli S."/>
            <person name="Turner R."/>
            <person name="Yooseph S."/>
            <person name="Lu F."/>
            <person name="Nusskern D.R."/>
            <person name="Shue B.C."/>
            <person name="Zheng X.H."/>
            <person name="Zhong F."/>
            <person name="Delcher A.L."/>
            <person name="Huson D.H."/>
            <person name="Kravitz S.A."/>
            <person name="Mouchard L."/>
            <person name="Reinert K."/>
            <person name="Remington K.A."/>
            <person name="Clark A.G."/>
            <person name="Waterman M.S."/>
            <person name="Eichler E.E."/>
            <person name="Adams M.D."/>
            <person name="Hunkapiller M.W."/>
            <person name="Myers E.W."/>
            <person name="Venter J.C."/>
        </authorList>
    </citation>
    <scope>NUCLEOTIDE SEQUENCE [LARGE SCALE GENOMIC DNA]</scope>
</reference>
<reference key="5">
    <citation type="journal article" date="2004" name="Genome Res.">
        <title>The status, quality, and expansion of the NIH full-length cDNA project: the Mammalian Gene Collection (MGC).</title>
        <authorList>
            <consortium name="The MGC Project Team"/>
        </authorList>
    </citation>
    <scope>NUCLEOTIDE SEQUENCE [LARGE SCALE MRNA] (ISOFORMS 1 AND 2)</scope>
    <source>
        <tissue>Brain</tissue>
    </source>
</reference>
<reference key="6">
    <citation type="journal article" date="2008" name="Mol. Cell">
        <title>Kinase-selective enrichment enables quantitative phosphoproteomics of the kinome across the cell cycle.</title>
        <authorList>
            <person name="Daub H."/>
            <person name="Olsen J.V."/>
            <person name="Bairlein M."/>
            <person name="Gnad F."/>
            <person name="Oppermann F.S."/>
            <person name="Korner R."/>
            <person name="Greff Z."/>
            <person name="Keri G."/>
            <person name="Stemmann O."/>
            <person name="Mann M."/>
        </authorList>
    </citation>
    <scope>IDENTIFICATION BY MASS SPECTROMETRY [LARGE SCALE ANALYSIS]</scope>
    <source>
        <tissue>Cervix carcinoma</tissue>
    </source>
</reference>
<reference key="7">
    <citation type="journal article" date="2010" name="Sci. Signal.">
        <title>Quantitative phosphoproteomics reveals widespread full phosphorylation site occupancy during mitosis.</title>
        <authorList>
            <person name="Olsen J.V."/>
            <person name="Vermeulen M."/>
            <person name="Santamaria A."/>
            <person name="Kumar C."/>
            <person name="Miller M.L."/>
            <person name="Jensen L.J."/>
            <person name="Gnad F."/>
            <person name="Cox J."/>
            <person name="Jensen T.S."/>
            <person name="Nigg E.A."/>
            <person name="Brunak S."/>
            <person name="Mann M."/>
        </authorList>
    </citation>
    <scope>PHOSPHORYLATION [LARGE SCALE ANALYSIS] AT SER-35</scope>
    <scope>IDENTIFICATION BY MASS SPECTROMETRY [LARGE SCALE ANALYSIS]</scope>
    <source>
        <tissue>Cervix carcinoma</tissue>
    </source>
</reference>
<reference key="8">
    <citation type="journal article" date="2011" name="BMC Syst. Biol.">
        <title>Initial characterization of the human central proteome.</title>
        <authorList>
            <person name="Burkard T.R."/>
            <person name="Planyavsky M."/>
            <person name="Kaupe I."/>
            <person name="Breitwieser F.P."/>
            <person name="Buerckstuemmer T."/>
            <person name="Bennett K.L."/>
            <person name="Superti-Furga G."/>
            <person name="Colinge J."/>
        </authorList>
    </citation>
    <scope>IDENTIFICATION BY MASS SPECTROMETRY [LARGE SCALE ANALYSIS]</scope>
</reference>
<reference key="9">
    <citation type="journal article" date="2013" name="J. Proteome Res.">
        <title>Toward a comprehensive characterization of a human cancer cell phosphoproteome.</title>
        <authorList>
            <person name="Zhou H."/>
            <person name="Di Palma S."/>
            <person name="Preisinger C."/>
            <person name="Peng M."/>
            <person name="Polat A.N."/>
            <person name="Heck A.J."/>
            <person name="Mohammed S."/>
        </authorList>
    </citation>
    <scope>PHOSPHORYLATION [LARGE SCALE ANALYSIS] AT THR-18</scope>
    <scope>IDENTIFICATION BY MASS SPECTROMETRY [LARGE SCALE ANALYSIS]</scope>
    <source>
        <tissue>Cervix carcinoma</tissue>
        <tissue>Erythroleukemia</tissue>
    </source>
</reference>
<reference key="10">
    <citation type="journal article" date="2018" name="Biochem. Biophys. Res. Commun.">
        <title>Stasimon/Tmem41b localizes to mitochondria-associated ER membranes and is essential for mouse embryonic development.</title>
        <authorList>
            <person name="Van Alstyne M."/>
            <person name="Lotti F."/>
            <person name="Dal Mas A."/>
            <person name="Area-Gomez E."/>
            <person name="Pellizzoni L."/>
        </authorList>
    </citation>
    <scope>SUBCELLULAR LOCATION</scope>
    <scope>INTERACTION WITH COPA; COPB1; VDAC1 AND ERLIN2</scope>
</reference>
<reference key="11">
    <citation type="journal article" date="2018" name="EMBO Rep.">
        <title>TMEM41B is a novel regulator of autophagy and lipid mobilization.</title>
        <authorList>
            <person name="Moretti F."/>
            <person name="Bergman P."/>
            <person name="Dodgson S."/>
            <person name="Marcellin D."/>
            <person name="Claerr I."/>
            <person name="Goodwin J.M."/>
            <person name="DeJesus R."/>
            <person name="Kang Z."/>
            <person name="Antczak C."/>
            <person name="Begue D."/>
            <person name="Bonenfant D."/>
            <person name="Graff A."/>
            <person name="Genoud C."/>
            <person name="Reece-Hoyes J.S."/>
            <person name="Russ C."/>
            <person name="Yang Z."/>
            <person name="Hoffman G.R."/>
            <person name="Mueller M."/>
            <person name="Murphy L.O."/>
            <person name="Xavier R.J."/>
            <person name="Nyfeler B."/>
        </authorList>
    </citation>
    <scope>FUNCTION</scope>
    <scope>SUBCELLULAR LOCATION</scope>
</reference>
<reference key="12">
    <citation type="journal article" date="2018" name="J. Cell Biol.">
        <title>Genome-wide CRISPR screen identifies TMEM41B as a gene required for autophagosome formation.</title>
        <authorList>
            <person name="Morita K."/>
            <person name="Hama Y."/>
            <person name="Izume T."/>
            <person name="Tamura N."/>
            <person name="Ueno T."/>
            <person name="Yamashita Y."/>
            <person name="Sakamaki Y."/>
            <person name="Mimura K."/>
            <person name="Morishita H."/>
            <person name="Shihoya W."/>
            <person name="Nureki O."/>
            <person name="Mano H."/>
            <person name="Mizushima N."/>
        </authorList>
    </citation>
    <scope>FUNCTION</scope>
    <scope>SUBCELLULAR LOCATION</scope>
    <scope>INTERACTION WITH VMP1</scope>
    <scope>REGION VTT DOMAIN</scope>
</reference>
<reference key="13">
    <citation type="journal article" date="2019" name="PLoS Biol.">
        <title>CRISPR screening using an expanded toolkit of autophagy reporters identifies TMEM41B as a novel autophagy factor.</title>
        <authorList>
            <person name="Shoemaker C.J."/>
            <person name="Huang T.Q."/>
            <person name="Weir N.R."/>
            <person name="Polyakov N.J."/>
            <person name="Schultz S.W."/>
            <person name="Denic V."/>
        </authorList>
    </citation>
    <scope>FUNCTION</scope>
    <scope>SUBCELLULAR LOCATION</scope>
</reference>
<reference key="14">
    <citation type="journal article" date="2020" name="Cell">
        <title>Genome-Scale Identification of SARS-CoV-2 and Pan-coronavirus Host Factor Networks.</title>
        <authorList>
            <person name="Schneider W.M."/>
            <person name="Luna J.M."/>
            <person name="Hoffmann H.H."/>
            <person name="Sanchez-Rivera F.J."/>
            <person name="Leal A.A."/>
            <person name="Ashbrook A.W."/>
            <person name="Le Pen J."/>
            <person name="Ricardo-Lax I."/>
            <person name="Michailidis E."/>
            <person name="Peace A."/>
            <person name="Stenzel A.F."/>
            <person name="Lowe S.W."/>
            <person name="MacDonald M.R."/>
            <person name="Rice C.M."/>
            <person name="Poirier J.T."/>
        </authorList>
    </citation>
    <scope>FUNCTION (MICROBIAL INFECTION)</scope>
</reference>
<reference key="15">
    <citation type="journal article" date="2020" name="Cell">
        <title>TMEM41B Is a Pan-flavivirus Host Factor.</title>
        <authorList>
            <person name="Hoffmann H.H."/>
            <person name="Schneider W.M."/>
            <person name="Rozen-Gagnon K."/>
            <person name="Miles L.A."/>
            <person name="Schuster F."/>
            <person name="Razooky B."/>
            <person name="Jacobson E."/>
            <person name="Wu X."/>
            <person name="Yi S."/>
            <person name="Rudin C.M."/>
            <person name="MacDonald M.R."/>
            <person name="McMullan L.K."/>
            <person name="Poirier J.T."/>
            <person name="Rice C.M."/>
        </authorList>
    </citation>
    <scope>FUNCTION (MICROBIAL INFECTION)</scope>
    <scope>DOMAIN (MICROBIAL INFECTION)</scope>
    <scope>CHARACTERIZATION OF VARIANTS LEU-266 AND VAL-266</scope>
    <scope>SUBCELLULAR LOCATION</scope>
    <scope>INTERACTION WITH ZIKA VIRUS NS4A PROTEIN AND YELLOW FEVER VIRUS NS4B PROTEIN (MICROBIAL INFECTION)</scope>
</reference>
<reference key="16">
    <citation type="journal article" date="2021" name="Cell Metab.">
        <title>TMEM41B acts as an ER scramblase required for lipoprotein biogenesis and lipid homeostasis.</title>
        <authorList>
            <person name="Huang D."/>
            <person name="Xu B."/>
            <person name="Liu L."/>
            <person name="Wu L."/>
            <person name="Zhu Y."/>
            <person name="Ghanbarpour A."/>
            <person name="Wang Y."/>
            <person name="Chen F.J."/>
            <person name="Lyu J."/>
            <person name="Hu Y."/>
            <person name="Kang Y."/>
            <person name="Zhou W."/>
            <person name="Wang X."/>
            <person name="Ding W."/>
            <person name="Li X."/>
            <person name="Jiang Z."/>
            <person name="Chen J."/>
            <person name="Zhang X."/>
            <person name="Zhou H."/>
            <person name="Li J.Z."/>
            <person name="Guo C."/>
            <person name="Zheng W."/>
            <person name="Zhang X."/>
            <person name="Li P."/>
            <person name="Melia T."/>
            <person name="Reinisch K."/>
            <person name="Chen X.W."/>
        </authorList>
    </citation>
    <scope>FUNCTION</scope>
    <scope>CATALYTIC ACTIVITY</scope>
    <scope>SUBCELLULAR LOCATION</scope>
    <scope>INTERACTION WITH SURF4</scope>
</reference>
<reference key="17">
    <citation type="journal article" date="2021" name="J. Cell Biol.">
        <title>TMEM41B and VMP1 are scramblases and regulate the distribution of cholesterol and phosphatidylserine.</title>
        <authorList>
            <person name="Li Y.E."/>
            <person name="Wang Y."/>
            <person name="Du X."/>
            <person name="Zhang T."/>
            <person name="Mak H.Y."/>
            <person name="Hancock S.E."/>
            <person name="McEwen H."/>
            <person name="Pandzic E."/>
            <person name="Whan R.M."/>
            <person name="Aw Y.C."/>
            <person name="Lukmantara I.E."/>
            <person name="Yuan Y."/>
            <person name="Dong X."/>
            <person name="Don A."/>
            <person name="Turner N."/>
            <person name="Qi S."/>
            <person name="Yang H."/>
        </authorList>
    </citation>
    <scope>FUNCTION</scope>
    <scope>CATALYTIC ACTIVITY</scope>
</reference>
<reference key="18">
    <citation type="journal article" date="2021" name="PLoS Pathog.">
        <title>TMEM41B is a host factor required for the replication of diverse coronaviruses including SARS-CoV-2.</title>
        <authorList>
            <person name="Trimarco J.D."/>
            <person name="Heaton B.E."/>
            <person name="Chaparian R.R."/>
            <person name="Burke K.N."/>
            <person name="Binder R.A."/>
            <person name="Gray G.C."/>
            <person name="Smith C.M."/>
            <person name="Menachery V.D."/>
            <person name="Heaton N.S."/>
        </authorList>
    </citation>
    <scope>FUNCTION</scope>
    <scope>FUNCTION (MICROBIAL INFECTION)</scope>
    <scope>SUBCELLULAR LOCATION</scope>
</reference>
<reference key="19">
    <citation type="journal article" date="2021" name="Proc. Natl. Acad. Sci. U.S.A.">
        <title>A model for a partnership of lipid transfer proteins and scramblases in membrane expansion and organelle biogenesis.</title>
        <authorList>
            <person name="Ghanbarpour A."/>
            <person name="Valverde D.P."/>
            <person name="Melia T.J."/>
            <person name="Reinisch K.M."/>
        </authorList>
    </citation>
    <scope>FUNCTION</scope>
    <scope>CATALYTIC ACTIVITY</scope>
    <scope>INTERACTION WITH ATG2A</scope>
</reference>